<keyword id="KW-0030">Aminoacyl-tRNA synthetase</keyword>
<keyword id="KW-0067">ATP-binding</keyword>
<keyword id="KW-0963">Cytoplasm</keyword>
<keyword id="KW-0436">Ligase</keyword>
<keyword id="KW-0479">Metal-binding</keyword>
<keyword id="KW-0547">Nucleotide-binding</keyword>
<keyword id="KW-0648">Protein biosynthesis</keyword>
<keyword id="KW-1185">Reference proteome</keyword>
<keyword id="KW-0862">Zinc</keyword>
<reference key="1">
    <citation type="journal article" date="2000" name="Genome">
        <title>Gene content and organization of a 281-kbp contig from the genome of the extremely thermophilic archaeon, Sulfolobus solfataricus P2.</title>
        <authorList>
            <person name="Charlebois R.L."/>
            <person name="Singh R.K."/>
            <person name="Chan-Weiher C.C.-Y."/>
            <person name="Allard G."/>
            <person name="Chow C."/>
            <person name="Confalonieri F."/>
            <person name="Curtis B."/>
            <person name="Duguet M."/>
            <person name="Erauso G."/>
            <person name="Faguy D."/>
            <person name="Gaasterland T."/>
            <person name="Garrett R.A."/>
            <person name="Gordon P."/>
            <person name="Jeffries A.C."/>
            <person name="Kozera C."/>
            <person name="Kushwaha N."/>
            <person name="Lafleur E."/>
            <person name="Medina N."/>
            <person name="Peng X."/>
            <person name="Penny S.L."/>
            <person name="She Q."/>
            <person name="St Jean A."/>
            <person name="van der Oost J."/>
            <person name="Young F."/>
            <person name="Zivanovic Y."/>
            <person name="Doolittle W.F."/>
            <person name="Ragan M.A."/>
            <person name="Sensen C.W."/>
        </authorList>
    </citation>
    <scope>NUCLEOTIDE SEQUENCE [LARGE SCALE GENOMIC DNA]</scope>
    <source>
        <strain>ATCC 35092 / DSM 1617 / JCM 11322 / P2</strain>
    </source>
</reference>
<reference key="2">
    <citation type="journal article" date="2001" name="Proc. Natl. Acad. Sci. U.S.A.">
        <title>The complete genome of the crenarchaeon Sulfolobus solfataricus P2.</title>
        <authorList>
            <person name="She Q."/>
            <person name="Singh R.K."/>
            <person name="Confalonieri F."/>
            <person name="Zivanovic Y."/>
            <person name="Allard G."/>
            <person name="Awayez M.J."/>
            <person name="Chan-Weiher C.C.-Y."/>
            <person name="Clausen I.G."/>
            <person name="Curtis B.A."/>
            <person name="De Moors A."/>
            <person name="Erauso G."/>
            <person name="Fletcher C."/>
            <person name="Gordon P.M.K."/>
            <person name="Heikamp-de Jong I."/>
            <person name="Jeffries A.C."/>
            <person name="Kozera C.J."/>
            <person name="Medina N."/>
            <person name="Peng X."/>
            <person name="Thi-Ngoc H.P."/>
            <person name="Redder P."/>
            <person name="Schenk M.E."/>
            <person name="Theriault C."/>
            <person name="Tolstrup N."/>
            <person name="Charlebois R.L."/>
            <person name="Doolittle W.F."/>
            <person name="Duguet M."/>
            <person name="Gaasterland T."/>
            <person name="Garrett R.A."/>
            <person name="Ragan M.A."/>
            <person name="Sensen C.W."/>
            <person name="Van der Oost J."/>
        </authorList>
    </citation>
    <scope>NUCLEOTIDE SEQUENCE [LARGE SCALE GENOMIC DNA]</scope>
    <source>
        <strain>ATCC 35092 / DSM 1617 / JCM 11322 / P2</strain>
    </source>
</reference>
<gene>
    <name type="primary">ileS</name>
    <name type="ordered locus">SSO0722</name>
    <name type="ORF">C10_008</name>
</gene>
<comment type="function">
    <text evidence="1">Catalyzes the attachment of isoleucine to tRNA(Ile). As IleRS can inadvertently accommodate and process structurally similar amino acids such as valine, to avoid such errors it has two additional distinct tRNA(Ile)-dependent editing activities. One activity is designated as 'pretransfer' editing and involves the hydrolysis of activated Val-AMP. The other activity is designated 'posttransfer' editing and involves deacylation of mischarged Val-tRNA(Ile) (By similarity).</text>
</comment>
<comment type="catalytic activity">
    <reaction>
        <text>tRNA(Ile) + L-isoleucine + ATP = L-isoleucyl-tRNA(Ile) + AMP + diphosphate</text>
        <dbReference type="Rhea" id="RHEA:11060"/>
        <dbReference type="Rhea" id="RHEA-COMP:9666"/>
        <dbReference type="Rhea" id="RHEA-COMP:9695"/>
        <dbReference type="ChEBI" id="CHEBI:30616"/>
        <dbReference type="ChEBI" id="CHEBI:33019"/>
        <dbReference type="ChEBI" id="CHEBI:58045"/>
        <dbReference type="ChEBI" id="CHEBI:78442"/>
        <dbReference type="ChEBI" id="CHEBI:78528"/>
        <dbReference type="ChEBI" id="CHEBI:456215"/>
        <dbReference type="EC" id="6.1.1.5"/>
    </reaction>
</comment>
<comment type="cofactor">
    <cofactor evidence="1">
        <name>Zn(2+)</name>
        <dbReference type="ChEBI" id="CHEBI:29105"/>
    </cofactor>
</comment>
<comment type="subunit">
    <text evidence="1">Monomer.</text>
</comment>
<comment type="subcellular location">
    <subcellularLocation>
        <location evidence="1">Cytoplasm</location>
    </subcellularLocation>
</comment>
<comment type="domain">
    <text evidence="1">IleRS has two distinct active sites: one for aminoacylation and one for editing. The misactivated valine is translocated from the active site to the editing site, which sterically excludes the correctly activated isoleucine. The single editing site contains two valyl binding pockets, one specific for each substrate (Val-AMP or Val-tRNA(Ile)) (By similarity).</text>
</comment>
<comment type="similarity">
    <text evidence="2">Belongs to the class-I aminoacyl-tRNA synthetase family. IleS type 2 subfamily.</text>
</comment>
<protein>
    <recommendedName>
        <fullName>Isoleucine--tRNA ligase</fullName>
        <ecNumber>6.1.1.5</ecNumber>
    </recommendedName>
    <alternativeName>
        <fullName>Isoleucyl-tRNA synthetase</fullName>
        <shortName>IleRS</shortName>
    </alternativeName>
</protein>
<name>SYI_SACS2</name>
<organism>
    <name type="scientific">Saccharolobus solfataricus (strain ATCC 35092 / DSM 1617 / JCM 11322 / P2)</name>
    <name type="common">Sulfolobus solfataricus</name>
    <dbReference type="NCBI Taxonomy" id="273057"/>
    <lineage>
        <taxon>Archaea</taxon>
        <taxon>Thermoproteota</taxon>
        <taxon>Thermoprotei</taxon>
        <taxon>Sulfolobales</taxon>
        <taxon>Sulfolobaceae</taxon>
        <taxon>Saccharolobus</taxon>
    </lineage>
</organism>
<proteinExistence type="inferred from homology"/>
<evidence type="ECO:0000250" key="1"/>
<evidence type="ECO:0000305" key="2"/>
<sequence>MIKDCILRYQRVLGKRVHDQPGYDTHGLPIEVATEKLLGISNKQEIIDKIGVETFINKCKEFALSNADKMTQNFKNVGVFMDWERPYYTLDPSYISSSWSVIKKAYEKGMLDKGTAVLHWCPRCETTLSDYEVSEYRDLEDPSIYVKFKIKGEKNRYLLIWTTTPWTIPSNVFVMINKDYDYADVEVNGEILVIAKDRVEAVMKEASITNYKILRTYKGSELIGIKYEHPLREFVSAQTKLDDFHQVVDAGNIVTLTDGTGLVHSATGHGEEDFTVGQKYGFPVVMFVNDRGEFTEEGGKYKGLKVRDASKAIISDLKSKNTLFFEGKIVHRYPVCWRCKTPLILRAIDQWFIRVTKIKDKMLNEIEKVNWIPDWGKSRISNMVKELRDWVISRQRFWGTPLPIWICERCNNVMVVGSKEELESIAIDPVPNDLHRPWIDNVRVKCNKCGGVAKRIPDVADVWFDSGVAFFASLGKDWQEKWKELGPVDLVLEGHDQLRGWFFSLLRSGLILLDRAPYTSVLVHGFMLDEQGREMHKSLGNYVEPSVVVEKYGRDILRLWLLRNTTWEDAKFSWKALELTKRDLQIIWNTFVFASMYMNLDNFEPDKYTLDDIIKYAKIEDLWILSRFNSMLKKVNESMKDYKVHEMTNYLINFLIEDVSRFYIRLIRKRAWIEANTQDKIAMYYILYYILKQWIILASTIIPFISEKIYKSFVVNAKESVSMESSINYDERFIDNELERAFEVAREINEASLNARAKAGIKLRWPLAKVYIFIENEDTLAKVGRIKDVLISMLNAKDIEISKIEGFKSFSKYKVEPNRSIIGKEYKSMSPKIVEYIENNRDIIAMDILNKKQHVAKIDNFDIILNASYVIISEETVEGFISSKFSKGIVVISKEISESEEEEGLIRDIIRRIQFMRKQLKLNVLDYIEISMKVPEERVKTIQKWEEFIKSETRASNIILGEAKGDITMDWDIEGESYIIGIKKST</sequence>
<accession>Q9UXB1</accession>
<dbReference type="EC" id="6.1.1.5"/>
<dbReference type="EMBL" id="Y18930">
    <property type="protein sequence ID" value="CAB57581.1"/>
    <property type="molecule type" value="Genomic_DNA"/>
</dbReference>
<dbReference type="EMBL" id="AE006641">
    <property type="protein sequence ID" value="AAK41020.1"/>
    <property type="molecule type" value="Genomic_DNA"/>
</dbReference>
<dbReference type="PIR" id="E90220">
    <property type="entry name" value="E90220"/>
</dbReference>
<dbReference type="SMR" id="Q9UXB1"/>
<dbReference type="FunCoup" id="Q9UXB1">
    <property type="interactions" value="302"/>
</dbReference>
<dbReference type="STRING" id="273057.SSO0722"/>
<dbReference type="PaxDb" id="273057-SSO0722"/>
<dbReference type="EnsemblBacteria" id="AAK41020">
    <property type="protein sequence ID" value="AAK41020"/>
    <property type="gene ID" value="SSO0722"/>
</dbReference>
<dbReference type="KEGG" id="sso:SSO0722"/>
<dbReference type="PATRIC" id="fig|273057.12.peg.720"/>
<dbReference type="eggNOG" id="arCOG00807">
    <property type="taxonomic scope" value="Archaea"/>
</dbReference>
<dbReference type="HOGENOM" id="CLU_001493_1_1_2"/>
<dbReference type="InParanoid" id="Q9UXB1"/>
<dbReference type="PhylomeDB" id="Q9UXB1"/>
<dbReference type="Proteomes" id="UP000001974">
    <property type="component" value="Chromosome"/>
</dbReference>
<dbReference type="GO" id="GO:0005829">
    <property type="term" value="C:cytosol"/>
    <property type="evidence" value="ECO:0000318"/>
    <property type="project" value="GO_Central"/>
</dbReference>
<dbReference type="GO" id="GO:0002161">
    <property type="term" value="F:aminoacyl-tRNA deacylase activity"/>
    <property type="evidence" value="ECO:0007669"/>
    <property type="project" value="InterPro"/>
</dbReference>
<dbReference type="GO" id="GO:0005524">
    <property type="term" value="F:ATP binding"/>
    <property type="evidence" value="ECO:0007669"/>
    <property type="project" value="UniProtKB-KW"/>
</dbReference>
<dbReference type="GO" id="GO:0004822">
    <property type="term" value="F:isoleucine-tRNA ligase activity"/>
    <property type="evidence" value="ECO:0000318"/>
    <property type="project" value="GO_Central"/>
</dbReference>
<dbReference type="GO" id="GO:0046872">
    <property type="term" value="F:metal ion binding"/>
    <property type="evidence" value="ECO:0007669"/>
    <property type="project" value="UniProtKB-KW"/>
</dbReference>
<dbReference type="GO" id="GO:0000049">
    <property type="term" value="F:tRNA binding"/>
    <property type="evidence" value="ECO:0007669"/>
    <property type="project" value="InterPro"/>
</dbReference>
<dbReference type="GO" id="GO:0006428">
    <property type="term" value="P:isoleucyl-tRNA aminoacylation"/>
    <property type="evidence" value="ECO:0000318"/>
    <property type="project" value="GO_Central"/>
</dbReference>
<dbReference type="CDD" id="cd07961">
    <property type="entry name" value="Anticodon_Ia_Ile_ABEc"/>
    <property type="match status" value="1"/>
</dbReference>
<dbReference type="CDD" id="cd00818">
    <property type="entry name" value="IleRS_core"/>
    <property type="match status" value="1"/>
</dbReference>
<dbReference type="FunFam" id="1.10.730.10:FF:000083">
    <property type="entry name" value="Isoleucine--tRNA ligase"/>
    <property type="match status" value="1"/>
</dbReference>
<dbReference type="FunFam" id="3.40.50.620:FF:000325">
    <property type="entry name" value="Isoleucine--tRNA ligase"/>
    <property type="match status" value="1"/>
</dbReference>
<dbReference type="FunFam" id="3.90.740.10:FF:000041">
    <property type="entry name" value="Isoleucine--tRNA ligase"/>
    <property type="match status" value="1"/>
</dbReference>
<dbReference type="Gene3D" id="3.40.50.620">
    <property type="entry name" value="HUPs"/>
    <property type="match status" value="2"/>
</dbReference>
<dbReference type="Gene3D" id="1.10.730.10">
    <property type="entry name" value="Isoleucyl-tRNA Synthetase, Domain 1"/>
    <property type="match status" value="1"/>
</dbReference>
<dbReference type="Gene3D" id="3.90.740.10">
    <property type="entry name" value="Valyl/Leucyl/Isoleucyl-tRNA synthetase, editing domain"/>
    <property type="match status" value="1"/>
</dbReference>
<dbReference type="InterPro" id="IPR002300">
    <property type="entry name" value="aa-tRNA-synth_Ia"/>
</dbReference>
<dbReference type="InterPro" id="IPR033709">
    <property type="entry name" value="Anticodon_Ile_ABEc"/>
</dbReference>
<dbReference type="InterPro" id="IPR002301">
    <property type="entry name" value="Ile-tRNA-ligase"/>
</dbReference>
<dbReference type="InterPro" id="IPR050081">
    <property type="entry name" value="Ile-tRNA_ligase"/>
</dbReference>
<dbReference type="InterPro" id="IPR013155">
    <property type="entry name" value="M/V/L/I-tRNA-synth_anticd-bd"/>
</dbReference>
<dbReference type="InterPro" id="IPR014729">
    <property type="entry name" value="Rossmann-like_a/b/a_fold"/>
</dbReference>
<dbReference type="InterPro" id="IPR009080">
    <property type="entry name" value="tRNAsynth_Ia_anticodon-bd"/>
</dbReference>
<dbReference type="InterPro" id="IPR009008">
    <property type="entry name" value="Val/Leu/Ile-tRNA-synth_edit"/>
</dbReference>
<dbReference type="NCBIfam" id="TIGR00392">
    <property type="entry name" value="ileS"/>
    <property type="match status" value="1"/>
</dbReference>
<dbReference type="PANTHER" id="PTHR42765:SF1">
    <property type="entry name" value="ISOLEUCINE--TRNA LIGASE, MITOCHONDRIAL"/>
    <property type="match status" value="1"/>
</dbReference>
<dbReference type="PANTHER" id="PTHR42765">
    <property type="entry name" value="SOLEUCYL-TRNA SYNTHETASE"/>
    <property type="match status" value="1"/>
</dbReference>
<dbReference type="Pfam" id="PF08264">
    <property type="entry name" value="Anticodon_1"/>
    <property type="match status" value="1"/>
</dbReference>
<dbReference type="Pfam" id="PF19302">
    <property type="entry name" value="DUF5915"/>
    <property type="match status" value="1"/>
</dbReference>
<dbReference type="Pfam" id="PF00133">
    <property type="entry name" value="tRNA-synt_1"/>
    <property type="match status" value="1"/>
</dbReference>
<dbReference type="PRINTS" id="PR00984">
    <property type="entry name" value="TRNASYNTHILE"/>
</dbReference>
<dbReference type="SUPFAM" id="SSF47323">
    <property type="entry name" value="Anticodon-binding domain of a subclass of class I aminoacyl-tRNA synthetases"/>
    <property type="match status" value="2"/>
</dbReference>
<dbReference type="SUPFAM" id="SSF52374">
    <property type="entry name" value="Nucleotidylyl transferase"/>
    <property type="match status" value="1"/>
</dbReference>
<dbReference type="SUPFAM" id="SSF50677">
    <property type="entry name" value="ValRS/IleRS/LeuRS editing domain"/>
    <property type="match status" value="1"/>
</dbReference>
<feature type="chain" id="PRO_0000098593" description="Isoleucine--tRNA ligase">
    <location>
        <begin position="1"/>
        <end position="986"/>
    </location>
</feature>
<feature type="short sequence motif" description="'KMSKS' region">
    <location>
        <begin position="534"/>
        <end position="538"/>
    </location>
</feature>
<feature type="binding site" evidence="1">
    <location>
        <position position="537"/>
    </location>
    <ligand>
        <name>ATP</name>
        <dbReference type="ChEBI" id="CHEBI:30616"/>
    </ligand>
</feature>